<comment type="function">
    <text evidence="1">Essential component of the NELF complex, a complex that negatively regulates the elongation of transcription by RNA polymerase II (By similarity). The NELF complex, which acts via an association with the DSIF complex and causes transcriptional pausing, is counteracted by the P-TEFb kinase complex (By similarity). Provides the strongest RNA binding activity of the NELF complex and may initially recruit the NELF complex to RNA (By similarity).</text>
</comment>
<comment type="subunit">
    <text evidence="1 2">The NELF complex is composed of NELFA, NELFB, NELFCD and NELFE (By similarity). Interacts with NELFB (By similarity).</text>
</comment>
<comment type="subcellular location">
    <subcellularLocation>
        <location evidence="1">Nucleus</location>
    </subcellularLocation>
    <subcellularLocation>
        <location evidence="1">Chromosome</location>
    </subcellularLocation>
    <text evidence="1">Localizes to chromatin. Phosphorylation by the P-TEFb complex promotes its release from chromatin.</text>
</comment>
<comment type="domain">
    <text evidence="1">The RRM domain interacts with RNA, and is essential for NELF complex function. It is however not required for the NELF complex formation.</text>
</comment>
<comment type="PTM">
    <text evidence="1">Phosphorylated by the P-TEFb complex at sites next to its RNA recognition motif, promoting its release from chromatin.</text>
</comment>
<comment type="PTM">
    <text evidence="1">Sumoylated.</text>
</comment>
<comment type="PTM">
    <text evidence="1">Poly-ADP-ribosylated by PARP1, thereby preventing RNA-binding and relieving transcription pausing.</text>
</comment>
<comment type="similarity">
    <text evidence="6">Belongs to the RRM NELF-E family.</text>
</comment>
<feature type="chain" id="PRO_0000283704" description="Negative elongation factor E">
    <location>
        <begin position="1"/>
        <end position="374"/>
    </location>
</feature>
<feature type="repeat" description="1">
    <location>
        <begin position="184"/>
        <end position="185"/>
    </location>
</feature>
<feature type="repeat" description="2">
    <location>
        <begin position="186"/>
        <end position="187"/>
    </location>
</feature>
<feature type="repeat" description="3">
    <location>
        <begin position="188"/>
        <end position="189"/>
    </location>
</feature>
<feature type="repeat" description="4">
    <location>
        <begin position="190"/>
        <end position="191"/>
    </location>
</feature>
<feature type="repeat" description="5">
    <location>
        <begin position="192"/>
        <end position="193"/>
    </location>
</feature>
<feature type="repeat" description="6">
    <location>
        <begin position="194"/>
        <end position="195"/>
    </location>
</feature>
<feature type="repeat" description="7">
    <location>
        <begin position="196"/>
        <end position="197"/>
    </location>
</feature>
<feature type="repeat" description="8">
    <location>
        <begin position="198"/>
        <end position="199"/>
    </location>
</feature>
<feature type="repeat" description="9">
    <location>
        <begin position="200"/>
        <end position="201"/>
    </location>
</feature>
<feature type="repeat" description="10">
    <location>
        <begin position="202"/>
        <end position="203"/>
    </location>
</feature>
<feature type="repeat" description="11">
    <location>
        <begin position="204"/>
        <end position="205"/>
    </location>
</feature>
<feature type="repeat" description="12">
    <location>
        <begin position="206"/>
        <end position="207"/>
    </location>
</feature>
<feature type="repeat" description="13">
    <location>
        <begin position="208"/>
        <end position="209"/>
    </location>
</feature>
<feature type="repeat" description="14">
    <location>
        <begin position="210"/>
        <end position="211"/>
    </location>
</feature>
<feature type="repeat" description="15">
    <location>
        <begin position="212"/>
        <end position="213"/>
    </location>
</feature>
<feature type="repeat" description="16">
    <location>
        <begin position="214"/>
        <end position="215"/>
    </location>
</feature>
<feature type="repeat" description="17">
    <location>
        <begin position="216"/>
        <end position="217"/>
    </location>
</feature>
<feature type="repeat" description="18">
    <location>
        <begin position="218"/>
        <end position="219"/>
    </location>
</feature>
<feature type="repeat" description="19">
    <location>
        <begin position="220"/>
        <end position="221"/>
    </location>
</feature>
<feature type="repeat" description="20">
    <location>
        <begin position="222"/>
        <end position="223"/>
    </location>
</feature>
<feature type="repeat" description="21">
    <location>
        <begin position="224"/>
        <end position="225"/>
    </location>
</feature>
<feature type="repeat" description="22">
    <location>
        <begin position="226"/>
        <end position="227"/>
    </location>
</feature>
<feature type="repeat" description="23">
    <location>
        <begin position="228"/>
        <end position="229"/>
    </location>
</feature>
<feature type="repeat" description="24">
    <location>
        <begin position="230"/>
        <end position="231"/>
    </location>
</feature>
<feature type="repeat" description="25">
    <location>
        <begin position="232"/>
        <end position="233"/>
    </location>
</feature>
<feature type="repeat" description="26">
    <location>
        <begin position="234"/>
        <end position="235"/>
    </location>
</feature>
<feature type="repeat" description="27">
    <location>
        <begin position="236"/>
        <end position="237"/>
    </location>
</feature>
<feature type="domain" description="RRM" evidence="4">
    <location>
        <begin position="256"/>
        <end position="326"/>
    </location>
</feature>
<feature type="region of interest" description="Disordered" evidence="5">
    <location>
        <begin position="30"/>
        <end position="58"/>
    </location>
</feature>
<feature type="region of interest" description="Disordered" evidence="5">
    <location>
        <begin position="79"/>
        <end position="252"/>
    </location>
</feature>
<feature type="region of interest" description="27 X 2 AA approximate tandem repeats of R-[DSNE]">
    <location>
        <begin position="184"/>
        <end position="237"/>
    </location>
</feature>
<feature type="coiled-coil region" evidence="3">
    <location>
        <begin position="7"/>
        <end position="36"/>
    </location>
</feature>
<feature type="compositionally biased region" description="Low complexity" evidence="5">
    <location>
        <begin position="30"/>
        <end position="43"/>
    </location>
</feature>
<feature type="compositionally biased region" description="Basic and acidic residues" evidence="5">
    <location>
        <begin position="90"/>
        <end position="101"/>
    </location>
</feature>
<feature type="compositionally biased region" description="Basic and acidic residues" evidence="5">
    <location>
        <begin position="186"/>
        <end position="250"/>
    </location>
</feature>
<feature type="modified residue" description="Phosphoserine" evidence="1">
    <location>
        <position position="51"/>
    </location>
</feature>
<feature type="modified residue" description="Phosphoserine" evidence="1">
    <location>
        <position position="113"/>
    </location>
</feature>
<feature type="modified residue" description="Phosphoserine" evidence="1">
    <location>
        <position position="115"/>
    </location>
</feature>
<feature type="modified residue" description="PolyADP-ribosyl glutamic acid" evidence="1">
    <location>
        <position position="122"/>
    </location>
</feature>
<feature type="modified residue" description="Phosphoserine" evidence="1">
    <location>
        <position position="131"/>
    </location>
</feature>
<feature type="modified residue" description="Phosphoserine" evidence="1">
    <location>
        <position position="139"/>
    </location>
</feature>
<feature type="modified residue" description="PolyADP-ribosyl glutamic acid" evidence="1">
    <location>
        <position position="151"/>
    </location>
</feature>
<feature type="modified residue" description="Phosphoserine" evidence="1">
    <location>
        <position position="165"/>
    </location>
</feature>
<feature type="modified residue" description="PolyADP-ribosyl glutamic acid" evidence="1">
    <location>
        <position position="172"/>
    </location>
</feature>
<feature type="modified residue" description="Phosphoserine" evidence="1">
    <location>
        <position position="179"/>
    </location>
</feature>
<feature type="modified residue" description="Phosphoserine" evidence="1">
    <location>
        <position position="181"/>
    </location>
</feature>
<feature type="modified residue" description="Phosphoserine" evidence="1">
    <location>
        <position position="185"/>
    </location>
</feature>
<feature type="modified residue" description="Phosphoserine" evidence="1">
    <location>
        <position position="187"/>
    </location>
</feature>
<feature type="modified residue" description="Phosphoserine" evidence="1">
    <location>
        <position position="191"/>
    </location>
</feature>
<feature type="modified residue" description="Phosphoserine" evidence="1">
    <location>
        <position position="243"/>
    </location>
</feature>
<feature type="modified residue" description="Phosphoserine" evidence="1">
    <location>
        <position position="245"/>
    </location>
</feature>
<feature type="modified residue" description="Phosphothreonine" evidence="1">
    <location>
        <position position="266"/>
    </location>
</feature>
<feature type="modified residue" description="Phosphothreonine" evidence="1">
    <location>
        <position position="268"/>
    </location>
</feature>
<feature type="modified residue" description="Phosphoserine" evidence="1">
    <location>
        <position position="275"/>
    </location>
</feature>
<feature type="modified residue" description="Phosphoserine" evidence="1">
    <location>
        <position position="347"/>
    </location>
</feature>
<feature type="modified residue" description="PolyADP-ribosyl glutamic acid" evidence="1">
    <location>
        <position position="368"/>
    </location>
</feature>
<feature type="cross-link" description="Glycyl lysine isopeptide (Lys-Gly) (interchain with G-Cter in SUMO1); alternate" evidence="1">
    <location>
        <position position="78"/>
    </location>
</feature>
<feature type="cross-link" description="Glycyl lysine isopeptide (Lys-Gly) (interchain with G-Cter in SUMO2); alternate" evidence="1">
    <location>
        <position position="78"/>
    </location>
</feature>
<feature type="cross-link" description="Glycyl lysine isopeptide (Lys-Gly) (interchain with G-Cter in SUMO2)" evidence="1">
    <location>
        <position position="82"/>
    </location>
</feature>
<proteinExistence type="evidence at transcript level"/>
<gene>
    <name type="primary">NELFE</name>
    <name type="synonym">RDBP</name>
</gene>
<evidence type="ECO:0000250" key="1">
    <source>
        <dbReference type="UniProtKB" id="P18615"/>
    </source>
</evidence>
<evidence type="ECO:0000250" key="2">
    <source>
        <dbReference type="UniProtKB" id="P19426"/>
    </source>
</evidence>
<evidence type="ECO:0000255" key="3"/>
<evidence type="ECO:0000255" key="4">
    <source>
        <dbReference type="PROSITE-ProRule" id="PRU00176"/>
    </source>
</evidence>
<evidence type="ECO:0000256" key="5">
    <source>
        <dbReference type="SAM" id="MobiDB-lite"/>
    </source>
</evidence>
<evidence type="ECO:0000305" key="6"/>
<dbReference type="EMBL" id="BT026321">
    <property type="protein sequence ID" value="ABG81477.1"/>
    <property type="molecule type" value="mRNA"/>
</dbReference>
<dbReference type="EMBL" id="BC120072">
    <property type="protein sequence ID" value="AAI20073.1"/>
    <property type="molecule type" value="mRNA"/>
</dbReference>
<dbReference type="RefSeq" id="NP_001069672.1">
    <property type="nucleotide sequence ID" value="NM_001076204.2"/>
</dbReference>
<dbReference type="BMRB" id="Q0V898"/>
<dbReference type="SMR" id="Q0V898"/>
<dbReference type="FunCoup" id="Q0V898">
    <property type="interactions" value="3840"/>
</dbReference>
<dbReference type="STRING" id="9913.ENSBTAP00000009802"/>
<dbReference type="iPTMnet" id="Q0V898"/>
<dbReference type="PaxDb" id="9913-ENSBTAP00000009802"/>
<dbReference type="PeptideAtlas" id="Q0V898"/>
<dbReference type="GeneID" id="540158"/>
<dbReference type="KEGG" id="bta:540158"/>
<dbReference type="CTD" id="7936"/>
<dbReference type="VEuPathDB" id="HostDB:ENSBTAG00000007453"/>
<dbReference type="eggNOG" id="ENOG502QQQ4">
    <property type="taxonomic scope" value="Eukaryota"/>
</dbReference>
<dbReference type="HOGENOM" id="CLU_055643_0_0_1"/>
<dbReference type="InParanoid" id="Q0V898"/>
<dbReference type="OMA" id="SQKSAHK"/>
<dbReference type="OrthoDB" id="378874at2759"/>
<dbReference type="TreeFam" id="TF324087"/>
<dbReference type="Reactome" id="R-BTA-112382">
    <property type="pathway name" value="Formation of RNA Pol II elongation complex"/>
</dbReference>
<dbReference type="Reactome" id="R-BTA-113418">
    <property type="pathway name" value="Formation of the Early Elongation Complex"/>
</dbReference>
<dbReference type="Reactome" id="R-BTA-674695">
    <property type="pathway name" value="RNA Polymerase II Pre-transcription Events"/>
</dbReference>
<dbReference type="Reactome" id="R-BTA-6796648">
    <property type="pathway name" value="TP53 Regulates Transcription of DNA Repair Genes"/>
</dbReference>
<dbReference type="Reactome" id="R-BTA-75955">
    <property type="pathway name" value="RNA Polymerase II Transcription Elongation"/>
</dbReference>
<dbReference type="Proteomes" id="UP000009136">
    <property type="component" value="Chromosome 23"/>
</dbReference>
<dbReference type="Bgee" id="ENSBTAG00000007453">
    <property type="expression patterns" value="Expressed in isthmus of fallopian tube and 106 other cell types or tissues"/>
</dbReference>
<dbReference type="GO" id="GO:0005694">
    <property type="term" value="C:chromosome"/>
    <property type="evidence" value="ECO:0007669"/>
    <property type="project" value="UniProtKB-SubCell"/>
</dbReference>
<dbReference type="GO" id="GO:0032021">
    <property type="term" value="C:NELF complex"/>
    <property type="evidence" value="ECO:0000318"/>
    <property type="project" value="GO_Central"/>
</dbReference>
<dbReference type="GO" id="GO:0003723">
    <property type="term" value="F:RNA binding"/>
    <property type="evidence" value="ECO:0000250"/>
    <property type="project" value="UniProtKB"/>
</dbReference>
<dbReference type="GO" id="GO:0034244">
    <property type="term" value="P:negative regulation of transcription elongation by RNA polymerase II"/>
    <property type="evidence" value="ECO:0000250"/>
    <property type="project" value="UniProtKB"/>
</dbReference>
<dbReference type="CDD" id="cd12305">
    <property type="entry name" value="RRM_NELFE"/>
    <property type="match status" value="1"/>
</dbReference>
<dbReference type="FunFam" id="3.30.70.330:FF:000188">
    <property type="entry name" value="Negative elongation factor complex member E"/>
    <property type="match status" value="1"/>
</dbReference>
<dbReference type="Gene3D" id="3.30.70.330">
    <property type="match status" value="1"/>
</dbReference>
<dbReference type="InterPro" id="IPR033102">
    <property type="entry name" value="NELFE"/>
</dbReference>
<dbReference type="InterPro" id="IPR034637">
    <property type="entry name" value="NELFE_RRM"/>
</dbReference>
<dbReference type="InterPro" id="IPR012677">
    <property type="entry name" value="Nucleotide-bd_a/b_plait_sf"/>
</dbReference>
<dbReference type="InterPro" id="IPR035979">
    <property type="entry name" value="RBD_domain_sf"/>
</dbReference>
<dbReference type="InterPro" id="IPR000504">
    <property type="entry name" value="RRM_dom"/>
</dbReference>
<dbReference type="PANTHER" id="PTHR17250">
    <property type="entry name" value="NEGATIVE ELONGATION FACTOR E"/>
    <property type="match status" value="1"/>
</dbReference>
<dbReference type="PANTHER" id="PTHR17250:SF0">
    <property type="entry name" value="NEGATIVE ELONGATION FACTOR E"/>
    <property type="match status" value="1"/>
</dbReference>
<dbReference type="Pfam" id="PF00076">
    <property type="entry name" value="RRM_1"/>
    <property type="match status" value="1"/>
</dbReference>
<dbReference type="SMART" id="SM00360">
    <property type="entry name" value="RRM"/>
    <property type="match status" value="1"/>
</dbReference>
<dbReference type="SUPFAM" id="SSF54928">
    <property type="entry name" value="RNA-binding domain, RBD"/>
    <property type="match status" value="1"/>
</dbReference>
<dbReference type="PROSITE" id="PS50102">
    <property type="entry name" value="RRM"/>
    <property type="match status" value="1"/>
</dbReference>
<protein>
    <recommendedName>
        <fullName>Negative elongation factor E</fullName>
        <shortName>NELF-E</shortName>
    </recommendedName>
    <alternativeName>
        <fullName>RNA-binding protein RD</fullName>
    </alternativeName>
</protein>
<keyword id="KW-0013">ADP-ribosylation</keyword>
<keyword id="KW-0158">Chromosome</keyword>
<keyword id="KW-0175">Coiled coil</keyword>
<keyword id="KW-1017">Isopeptide bond</keyword>
<keyword id="KW-0539">Nucleus</keyword>
<keyword id="KW-0597">Phosphoprotein</keyword>
<keyword id="KW-1185">Reference proteome</keyword>
<keyword id="KW-0677">Repeat</keyword>
<keyword id="KW-0678">Repressor</keyword>
<keyword id="KW-0694">RNA-binding</keyword>
<keyword id="KW-0804">Transcription</keyword>
<keyword id="KW-0805">Transcription regulation</keyword>
<keyword id="KW-0832">Ubl conjugation</keyword>
<name>NELFE_BOVIN</name>
<organism>
    <name type="scientific">Bos taurus</name>
    <name type="common">Bovine</name>
    <dbReference type="NCBI Taxonomy" id="9913"/>
    <lineage>
        <taxon>Eukaryota</taxon>
        <taxon>Metazoa</taxon>
        <taxon>Chordata</taxon>
        <taxon>Craniata</taxon>
        <taxon>Vertebrata</taxon>
        <taxon>Euteleostomi</taxon>
        <taxon>Mammalia</taxon>
        <taxon>Eutheria</taxon>
        <taxon>Laurasiatheria</taxon>
        <taxon>Artiodactyla</taxon>
        <taxon>Ruminantia</taxon>
        <taxon>Pecora</taxon>
        <taxon>Bovidae</taxon>
        <taxon>Bovinae</taxon>
        <taxon>Bos</taxon>
    </lineage>
</organism>
<sequence>MLVIPPGLSEEEEALQKKFNKLKKKKKALLALKKQSSSSTASQGGVKRSLSEQPVVDTATATEQAKQLVKSGAISAIKAETKNSGFKRSRTLEGKLKDPEKGPVPTFQPFQRSVSADDDLQESSRRPQRKSLYESFVSSSDRLRELGPDGEEAEGPGAGDGPPRSFDWGYEERGGARSSASPPRSRSRDRSRERNRDRDRDRDRERDRERDRDRDRDRERDRDRDRDRDRDRERDREGPFRRSDSFPERRAPRKGNTLYVYGEDMTPTLLRGAFSPFGNIIDLSMDPPRNCAFVTYEKMESADQAVAELNGTQVESVQLKVSIARKQPMLDAATGKSVWGSLAVQNSPKGCHRDKRTQIVYSDDVYKENLVDGF</sequence>
<accession>Q0V898</accession>
<reference key="1">
    <citation type="journal article" date="2005" name="BMC Genomics">
        <title>Characterization of 954 bovine full-CDS cDNA sequences.</title>
        <authorList>
            <person name="Harhay G.P."/>
            <person name="Sonstegard T.S."/>
            <person name="Keele J.W."/>
            <person name="Heaton M.P."/>
            <person name="Clawson M.L."/>
            <person name="Snelling W.M."/>
            <person name="Wiedmann R.T."/>
            <person name="Van Tassell C.P."/>
            <person name="Smith T.P.L."/>
        </authorList>
    </citation>
    <scope>NUCLEOTIDE SEQUENCE [LARGE SCALE MRNA]</scope>
</reference>
<reference key="2">
    <citation type="submission" date="2006-08" db="EMBL/GenBank/DDBJ databases">
        <authorList>
            <consortium name="NIH - Mammalian Gene Collection (MGC) project"/>
        </authorList>
    </citation>
    <scope>NUCLEOTIDE SEQUENCE [LARGE SCALE MRNA]</scope>
    <source>
        <strain>Hereford</strain>
        <tissue>Fetal pons</tissue>
    </source>
</reference>